<evidence type="ECO:0000255" key="1">
    <source>
        <dbReference type="HAMAP-Rule" id="MF_00046"/>
    </source>
</evidence>
<comment type="function">
    <text evidence="1">Cell wall formation.</text>
</comment>
<comment type="catalytic activity">
    <reaction evidence="1">
        <text>UDP-N-acetyl-alpha-D-muramate + L-alanine + ATP = UDP-N-acetyl-alpha-D-muramoyl-L-alanine + ADP + phosphate + H(+)</text>
        <dbReference type="Rhea" id="RHEA:23372"/>
        <dbReference type="ChEBI" id="CHEBI:15378"/>
        <dbReference type="ChEBI" id="CHEBI:30616"/>
        <dbReference type="ChEBI" id="CHEBI:43474"/>
        <dbReference type="ChEBI" id="CHEBI:57972"/>
        <dbReference type="ChEBI" id="CHEBI:70757"/>
        <dbReference type="ChEBI" id="CHEBI:83898"/>
        <dbReference type="ChEBI" id="CHEBI:456216"/>
        <dbReference type="EC" id="6.3.2.8"/>
    </reaction>
</comment>
<comment type="pathway">
    <text evidence="1">Cell wall biogenesis; peptidoglycan biosynthesis.</text>
</comment>
<comment type="subcellular location">
    <subcellularLocation>
        <location evidence="1">Cytoplasm</location>
    </subcellularLocation>
</comment>
<comment type="similarity">
    <text evidence="1">Belongs to the MurCDEF family.</text>
</comment>
<gene>
    <name evidence="1" type="primary">murC</name>
    <name type="ordered locus">BAbS19_I13550</name>
</gene>
<dbReference type="EC" id="6.3.2.8" evidence="1"/>
<dbReference type="EMBL" id="CP000887">
    <property type="protein sequence ID" value="ACD72850.1"/>
    <property type="molecule type" value="Genomic_DNA"/>
</dbReference>
<dbReference type="RefSeq" id="WP_002964538.1">
    <property type="nucleotide sequence ID" value="NC_010742.1"/>
</dbReference>
<dbReference type="SMR" id="B2S6Q3"/>
<dbReference type="GeneID" id="97533364"/>
<dbReference type="KEGG" id="bmc:BAbS19_I13550"/>
<dbReference type="HOGENOM" id="CLU_028104_2_2_5"/>
<dbReference type="UniPathway" id="UPA00219"/>
<dbReference type="Proteomes" id="UP000002565">
    <property type="component" value="Chromosome 1"/>
</dbReference>
<dbReference type="GO" id="GO:0005737">
    <property type="term" value="C:cytoplasm"/>
    <property type="evidence" value="ECO:0007669"/>
    <property type="project" value="UniProtKB-SubCell"/>
</dbReference>
<dbReference type="GO" id="GO:0005524">
    <property type="term" value="F:ATP binding"/>
    <property type="evidence" value="ECO:0007669"/>
    <property type="project" value="UniProtKB-UniRule"/>
</dbReference>
<dbReference type="GO" id="GO:0008763">
    <property type="term" value="F:UDP-N-acetylmuramate-L-alanine ligase activity"/>
    <property type="evidence" value="ECO:0007669"/>
    <property type="project" value="UniProtKB-UniRule"/>
</dbReference>
<dbReference type="GO" id="GO:0051301">
    <property type="term" value="P:cell division"/>
    <property type="evidence" value="ECO:0007669"/>
    <property type="project" value="UniProtKB-KW"/>
</dbReference>
<dbReference type="GO" id="GO:0071555">
    <property type="term" value="P:cell wall organization"/>
    <property type="evidence" value="ECO:0007669"/>
    <property type="project" value="UniProtKB-KW"/>
</dbReference>
<dbReference type="GO" id="GO:0009252">
    <property type="term" value="P:peptidoglycan biosynthetic process"/>
    <property type="evidence" value="ECO:0007669"/>
    <property type="project" value="UniProtKB-UniRule"/>
</dbReference>
<dbReference type="GO" id="GO:0008360">
    <property type="term" value="P:regulation of cell shape"/>
    <property type="evidence" value="ECO:0007669"/>
    <property type="project" value="UniProtKB-KW"/>
</dbReference>
<dbReference type="Gene3D" id="3.90.190.20">
    <property type="entry name" value="Mur ligase, C-terminal domain"/>
    <property type="match status" value="1"/>
</dbReference>
<dbReference type="Gene3D" id="3.40.1190.10">
    <property type="entry name" value="Mur-like, catalytic domain"/>
    <property type="match status" value="1"/>
</dbReference>
<dbReference type="Gene3D" id="3.40.50.720">
    <property type="entry name" value="NAD(P)-binding Rossmann-like Domain"/>
    <property type="match status" value="1"/>
</dbReference>
<dbReference type="HAMAP" id="MF_00046">
    <property type="entry name" value="MurC"/>
    <property type="match status" value="1"/>
</dbReference>
<dbReference type="InterPro" id="IPR036565">
    <property type="entry name" value="Mur-like_cat_sf"/>
</dbReference>
<dbReference type="InterPro" id="IPR004101">
    <property type="entry name" value="Mur_ligase_C"/>
</dbReference>
<dbReference type="InterPro" id="IPR036615">
    <property type="entry name" value="Mur_ligase_C_dom_sf"/>
</dbReference>
<dbReference type="InterPro" id="IPR013221">
    <property type="entry name" value="Mur_ligase_cen"/>
</dbReference>
<dbReference type="InterPro" id="IPR000713">
    <property type="entry name" value="Mur_ligase_N"/>
</dbReference>
<dbReference type="InterPro" id="IPR050061">
    <property type="entry name" value="MurCDEF_pg_biosynth"/>
</dbReference>
<dbReference type="InterPro" id="IPR005758">
    <property type="entry name" value="UDP-N-AcMur_Ala_ligase_MurC"/>
</dbReference>
<dbReference type="NCBIfam" id="TIGR01082">
    <property type="entry name" value="murC"/>
    <property type="match status" value="1"/>
</dbReference>
<dbReference type="PANTHER" id="PTHR43445:SF3">
    <property type="entry name" value="UDP-N-ACETYLMURAMATE--L-ALANINE LIGASE"/>
    <property type="match status" value="1"/>
</dbReference>
<dbReference type="PANTHER" id="PTHR43445">
    <property type="entry name" value="UDP-N-ACETYLMURAMATE--L-ALANINE LIGASE-RELATED"/>
    <property type="match status" value="1"/>
</dbReference>
<dbReference type="Pfam" id="PF01225">
    <property type="entry name" value="Mur_ligase"/>
    <property type="match status" value="1"/>
</dbReference>
<dbReference type="Pfam" id="PF02875">
    <property type="entry name" value="Mur_ligase_C"/>
    <property type="match status" value="1"/>
</dbReference>
<dbReference type="Pfam" id="PF08245">
    <property type="entry name" value="Mur_ligase_M"/>
    <property type="match status" value="1"/>
</dbReference>
<dbReference type="SUPFAM" id="SSF51984">
    <property type="entry name" value="MurCD N-terminal domain"/>
    <property type="match status" value="1"/>
</dbReference>
<dbReference type="SUPFAM" id="SSF53623">
    <property type="entry name" value="MurD-like peptide ligases, catalytic domain"/>
    <property type="match status" value="1"/>
</dbReference>
<dbReference type="SUPFAM" id="SSF53244">
    <property type="entry name" value="MurD-like peptide ligases, peptide-binding domain"/>
    <property type="match status" value="1"/>
</dbReference>
<reference key="1">
    <citation type="journal article" date="2008" name="PLoS ONE">
        <title>Genome sequence of Brucella abortus vaccine strain S19 compared to virulent strains yields candidate virulence genes.</title>
        <authorList>
            <person name="Crasta O.R."/>
            <person name="Folkerts O."/>
            <person name="Fei Z."/>
            <person name="Mane S.P."/>
            <person name="Evans C."/>
            <person name="Martino-Catt S."/>
            <person name="Bricker B."/>
            <person name="Yu G."/>
            <person name="Du L."/>
            <person name="Sobral B.W."/>
        </authorList>
    </citation>
    <scope>NUCLEOTIDE SEQUENCE [LARGE SCALE GENOMIC DNA]</scope>
    <source>
        <strain>S19</strain>
    </source>
</reference>
<feature type="chain" id="PRO_1000091080" description="UDP-N-acetylmuramate--L-alanine ligase">
    <location>
        <begin position="1"/>
        <end position="471"/>
    </location>
</feature>
<feature type="binding site" evidence="1">
    <location>
        <begin position="114"/>
        <end position="120"/>
    </location>
    <ligand>
        <name>ATP</name>
        <dbReference type="ChEBI" id="CHEBI:30616"/>
    </ligand>
</feature>
<sequence length="471" mass="50794">MKMPLNIGLVHFIGIGGIGMSGIAEVLHNLGYKVQGSDQSDSANVQRLREKGIEVFVGHKAENLGDAEVIVVSTAIKKNNPELVAAREKLLPVVRRAEMLAELMRFRRAVAIGGTHGKTTTTSLVAALLDAGHLDPTVINGGIINAYGTNARMGDGDWMVVEADESDGTFLKLPADIAVVTNIDPEHLDHYGNFDAVRAAFRQFVENVPFYGFGVMCLDHPEVQALVSRIEDRRIITYGSNPQAEVRFVNQRMDGAASLFDVVIRSRKGEATEIKDLRLPMPGLHNVSNATAAIAVAHELGISSDDIRRGLGSFGGVKRRFTHTGSWNGVEIFDDYGHHPVEIRAVLKAAREATSQAGGRVVAIVQPHRYTRLASLFDEFAACFNDADTVIVAPVYTAGEEPIEGVNSEELVSRIKTAGHRDARYATGPEALAPLVASIAQAGDFVVCLGAGNVTQWAYALPKELAEQGKK</sequence>
<name>MURC_BRUA1</name>
<protein>
    <recommendedName>
        <fullName evidence="1">UDP-N-acetylmuramate--L-alanine ligase</fullName>
        <ecNumber evidence="1">6.3.2.8</ecNumber>
    </recommendedName>
    <alternativeName>
        <fullName evidence="1">UDP-N-acetylmuramoyl-L-alanine synthetase</fullName>
    </alternativeName>
</protein>
<keyword id="KW-0067">ATP-binding</keyword>
<keyword id="KW-0131">Cell cycle</keyword>
<keyword id="KW-0132">Cell division</keyword>
<keyword id="KW-0133">Cell shape</keyword>
<keyword id="KW-0961">Cell wall biogenesis/degradation</keyword>
<keyword id="KW-0963">Cytoplasm</keyword>
<keyword id="KW-0436">Ligase</keyword>
<keyword id="KW-0547">Nucleotide-binding</keyword>
<keyword id="KW-0573">Peptidoglycan synthesis</keyword>
<proteinExistence type="inferred from homology"/>
<accession>B2S6Q3</accession>
<organism>
    <name type="scientific">Brucella abortus (strain S19)</name>
    <dbReference type="NCBI Taxonomy" id="430066"/>
    <lineage>
        <taxon>Bacteria</taxon>
        <taxon>Pseudomonadati</taxon>
        <taxon>Pseudomonadota</taxon>
        <taxon>Alphaproteobacteria</taxon>
        <taxon>Hyphomicrobiales</taxon>
        <taxon>Brucellaceae</taxon>
        <taxon>Brucella/Ochrobactrum group</taxon>
        <taxon>Brucella</taxon>
    </lineage>
</organism>